<gene>
    <name type="primary">rpoZ</name>
    <name type="ordered locus">NMB1660</name>
</gene>
<evidence type="ECO:0000250" key="1"/>
<evidence type="ECO:0000305" key="2"/>
<reference key="1">
    <citation type="journal article" date="2000" name="Science">
        <title>Complete genome sequence of Neisseria meningitidis serogroup B strain MC58.</title>
        <authorList>
            <person name="Tettelin H."/>
            <person name="Saunders N.J."/>
            <person name="Heidelberg J.F."/>
            <person name="Jeffries A.C."/>
            <person name="Nelson K.E."/>
            <person name="Eisen J.A."/>
            <person name="Ketchum K.A."/>
            <person name="Hood D.W."/>
            <person name="Peden J.F."/>
            <person name="Dodson R.J."/>
            <person name="Nelson W.C."/>
            <person name="Gwinn M.L."/>
            <person name="DeBoy R.T."/>
            <person name="Peterson J.D."/>
            <person name="Hickey E.K."/>
            <person name="Haft D.H."/>
            <person name="Salzberg S.L."/>
            <person name="White O."/>
            <person name="Fleischmann R.D."/>
            <person name="Dougherty B.A."/>
            <person name="Mason T.M."/>
            <person name="Ciecko A."/>
            <person name="Parksey D.S."/>
            <person name="Blair E."/>
            <person name="Cittone H."/>
            <person name="Clark E.B."/>
            <person name="Cotton M.D."/>
            <person name="Utterback T.R."/>
            <person name="Khouri H.M."/>
            <person name="Qin H."/>
            <person name="Vamathevan J.J."/>
            <person name="Gill J."/>
            <person name="Scarlato V."/>
            <person name="Masignani V."/>
            <person name="Pizza M."/>
            <person name="Grandi G."/>
            <person name="Sun L."/>
            <person name="Smith H.O."/>
            <person name="Fraser C.M."/>
            <person name="Moxon E.R."/>
            <person name="Rappuoli R."/>
            <person name="Venter J.C."/>
        </authorList>
    </citation>
    <scope>NUCLEOTIDE SEQUENCE [LARGE SCALE GENOMIC DNA]</scope>
    <source>
        <strain>ATCC BAA-335 / MC58</strain>
    </source>
</reference>
<dbReference type="EC" id="2.7.7.6"/>
<dbReference type="EMBL" id="AE002098">
    <property type="protein sequence ID" value="AAF42009.1"/>
    <property type="molecule type" value="Genomic_DNA"/>
</dbReference>
<dbReference type="PIR" id="F81055">
    <property type="entry name" value="F81055"/>
</dbReference>
<dbReference type="RefSeq" id="NP_274665.1">
    <property type="nucleotide sequence ID" value="NC_003112.2"/>
</dbReference>
<dbReference type="RefSeq" id="WP_002212665.1">
    <property type="nucleotide sequence ID" value="NC_003112.2"/>
</dbReference>
<dbReference type="SMR" id="P66724"/>
<dbReference type="FunCoup" id="P66724">
    <property type="interactions" value="172"/>
</dbReference>
<dbReference type="STRING" id="122586.NMB1660"/>
<dbReference type="PaxDb" id="122586-NMB1660"/>
<dbReference type="GeneID" id="93387665"/>
<dbReference type="KEGG" id="nme:NMB1660"/>
<dbReference type="PATRIC" id="fig|122586.8.peg.2137"/>
<dbReference type="HOGENOM" id="CLU_125406_5_2_4"/>
<dbReference type="InParanoid" id="P66724"/>
<dbReference type="OrthoDB" id="9796300at2"/>
<dbReference type="Proteomes" id="UP000000425">
    <property type="component" value="Chromosome"/>
</dbReference>
<dbReference type="GO" id="GO:0000345">
    <property type="term" value="C:cytosolic DNA-directed RNA polymerase complex"/>
    <property type="evidence" value="ECO:0000318"/>
    <property type="project" value="GO_Central"/>
</dbReference>
<dbReference type="GO" id="GO:0001000">
    <property type="term" value="F:bacterial-type RNA polymerase core enzyme binding"/>
    <property type="evidence" value="ECO:0000318"/>
    <property type="project" value="GO_Central"/>
</dbReference>
<dbReference type="GO" id="GO:0003677">
    <property type="term" value="F:DNA binding"/>
    <property type="evidence" value="ECO:0007669"/>
    <property type="project" value="UniProtKB-UniRule"/>
</dbReference>
<dbReference type="GO" id="GO:0003899">
    <property type="term" value="F:DNA-directed RNA polymerase activity"/>
    <property type="evidence" value="ECO:0007669"/>
    <property type="project" value="UniProtKB-UniRule"/>
</dbReference>
<dbReference type="GO" id="GO:0006352">
    <property type="term" value="P:DNA-templated transcription initiation"/>
    <property type="evidence" value="ECO:0000318"/>
    <property type="project" value="GO_Central"/>
</dbReference>
<dbReference type="Gene3D" id="3.90.940.10">
    <property type="match status" value="1"/>
</dbReference>
<dbReference type="HAMAP" id="MF_00366">
    <property type="entry name" value="RNApol_bact_RpoZ"/>
    <property type="match status" value="1"/>
</dbReference>
<dbReference type="InterPro" id="IPR003716">
    <property type="entry name" value="DNA-dir_RNA_pol_omega"/>
</dbReference>
<dbReference type="InterPro" id="IPR006110">
    <property type="entry name" value="Pol_omega/Rpo6/RPB6"/>
</dbReference>
<dbReference type="InterPro" id="IPR036161">
    <property type="entry name" value="RPB6/omega-like_sf"/>
</dbReference>
<dbReference type="NCBIfam" id="TIGR00690">
    <property type="entry name" value="rpoZ"/>
    <property type="match status" value="1"/>
</dbReference>
<dbReference type="PANTHER" id="PTHR34476">
    <property type="entry name" value="DNA-DIRECTED RNA POLYMERASE SUBUNIT OMEGA"/>
    <property type="match status" value="1"/>
</dbReference>
<dbReference type="PANTHER" id="PTHR34476:SF1">
    <property type="entry name" value="DNA-DIRECTED RNA POLYMERASE SUBUNIT OMEGA"/>
    <property type="match status" value="1"/>
</dbReference>
<dbReference type="Pfam" id="PF01192">
    <property type="entry name" value="RNA_pol_Rpb6"/>
    <property type="match status" value="1"/>
</dbReference>
<dbReference type="SMART" id="SM01409">
    <property type="entry name" value="RNA_pol_Rpb6"/>
    <property type="match status" value="1"/>
</dbReference>
<dbReference type="SUPFAM" id="SSF63562">
    <property type="entry name" value="RPB6/omega subunit-like"/>
    <property type="match status" value="1"/>
</dbReference>
<protein>
    <recommendedName>
        <fullName>DNA-directed RNA polymerase subunit omega</fullName>
        <shortName>RNAP omega subunit</shortName>
        <ecNumber>2.7.7.6</ecNumber>
    </recommendedName>
    <alternativeName>
        <fullName>RNA polymerase omega subunit</fullName>
    </alternativeName>
    <alternativeName>
        <fullName>Transcriptase subunit omega</fullName>
    </alternativeName>
</protein>
<sequence length="68" mass="7500">MARITTEDCTGKISNHFDLTLVAARRARQLENGNTPLVDDVRNNKPTVTALREIAAGHIGTELLTRNK</sequence>
<name>RPOZ_NEIMB</name>
<proteinExistence type="inferred from homology"/>
<accession>P66724</accession>
<accession>Q9JQS9</accession>
<feature type="chain" id="PRO_0000128955" description="DNA-directed RNA polymerase subunit omega">
    <location>
        <begin position="1"/>
        <end position="68"/>
    </location>
</feature>
<keyword id="KW-0240">DNA-directed RNA polymerase</keyword>
<keyword id="KW-0548">Nucleotidyltransferase</keyword>
<keyword id="KW-1185">Reference proteome</keyword>
<keyword id="KW-0804">Transcription</keyword>
<keyword id="KW-0808">Transferase</keyword>
<organism>
    <name type="scientific">Neisseria meningitidis serogroup B (strain ATCC BAA-335 / MC58)</name>
    <dbReference type="NCBI Taxonomy" id="122586"/>
    <lineage>
        <taxon>Bacteria</taxon>
        <taxon>Pseudomonadati</taxon>
        <taxon>Pseudomonadota</taxon>
        <taxon>Betaproteobacteria</taxon>
        <taxon>Neisseriales</taxon>
        <taxon>Neisseriaceae</taxon>
        <taxon>Neisseria</taxon>
    </lineage>
</organism>
<comment type="function">
    <text evidence="1">Promotes RNA polymerase assembly. Latches the N- and C-terminal regions of the beta' subunit thereby facilitating its interaction with the beta and alpha subunits (By similarity).</text>
</comment>
<comment type="catalytic activity">
    <reaction>
        <text>RNA(n) + a ribonucleoside 5'-triphosphate = RNA(n+1) + diphosphate</text>
        <dbReference type="Rhea" id="RHEA:21248"/>
        <dbReference type="Rhea" id="RHEA-COMP:14527"/>
        <dbReference type="Rhea" id="RHEA-COMP:17342"/>
        <dbReference type="ChEBI" id="CHEBI:33019"/>
        <dbReference type="ChEBI" id="CHEBI:61557"/>
        <dbReference type="ChEBI" id="CHEBI:140395"/>
        <dbReference type="EC" id="2.7.7.6"/>
    </reaction>
</comment>
<comment type="subunit">
    <text evidence="1">The RNAP catalytic core consists of 2 alpha, 1 beta, 1 beta' and 1 omega subunit. When a sigma factor is associated with the core the holoenzyme is formed, which can initiate transcription (By similarity).</text>
</comment>
<comment type="similarity">
    <text evidence="2">Belongs to the RNA polymerase subunit omega family.</text>
</comment>